<gene>
    <name evidence="1" type="primary">pnp</name>
    <name type="ordered locus">OCAR_4503</name>
    <name type="ordered locus">OCA5_c00310</name>
</gene>
<name>PNP_AFIC5</name>
<keyword id="KW-0963">Cytoplasm</keyword>
<keyword id="KW-0460">Magnesium</keyword>
<keyword id="KW-0479">Metal-binding</keyword>
<keyword id="KW-0548">Nucleotidyltransferase</keyword>
<keyword id="KW-1185">Reference proteome</keyword>
<keyword id="KW-0694">RNA-binding</keyword>
<keyword id="KW-0808">Transferase</keyword>
<proteinExistence type="inferred from homology"/>
<organism>
    <name type="scientific">Afipia carboxidovorans (strain ATCC 49405 / DSM 1227 / KCTC 32145 / OM5)</name>
    <name type="common">Oligotropha carboxidovorans</name>
    <dbReference type="NCBI Taxonomy" id="504832"/>
    <lineage>
        <taxon>Bacteria</taxon>
        <taxon>Pseudomonadati</taxon>
        <taxon>Pseudomonadota</taxon>
        <taxon>Alphaproteobacteria</taxon>
        <taxon>Hyphomicrobiales</taxon>
        <taxon>Nitrobacteraceae</taxon>
        <taxon>Afipia</taxon>
    </lineage>
</organism>
<evidence type="ECO:0000255" key="1">
    <source>
        <dbReference type="HAMAP-Rule" id="MF_01595"/>
    </source>
</evidence>
<sequence length="714" mass="77474">MFNTHSVELDWGGRPLKLETGKVARQADGAVIATYGETVVMATVVSAKTPKEGIDFLPLTVNYQEKTYAAGRIPGGYFKREGRPSEKETLVSRLIDRPIRPLFADGYRCDTQVIVTTLSHDMENDPDIVAMVAASAALTLSGVPFMGPVGAARVAFVNNEFILNPTLDEMVDTQLDLVVAGTATAVLMVESEAKELPEEIMLGAVMFGHKHFQPVLKAIIELAEQAAKEPRDVVATVNADLEKEILGIVEQDLRKAYSIPVKQDRYAAVGAAKDKVLEHFFPEGIEPRYEKLRVLDVFKDLEAKIVRWNILDTGRRIDGRDLKTVRPIVAEVGVLPRAHGSALFTRGETQALVVTTLGTGEDEQYIDSLAGTYKETFLLHYNFPPFSVGETGRIGSPGRREIGHGKLAWRAIHPVLPAHHEFPYTLRVVSEITESNGSSSMATVCGSSLALMDAGVPLKRPTAGIAMGLILEGDRFAVLSDILGDEDHLGDMDFKVAGTEKGVTSLQMDIKIAGITEEIMKVALTQAKDGRMHILGEMAKALTAARAELGEHAPRIEVLQIPTDKIRDVIGTGGKVIREIVEKTGAKINIEDDGTVKVASANGESIRAAIKWIKSITSEPEVGQIYDGTVVKVMEFGAFVNFFGPKDGLVHISQLAASRVQKTSDVVKEGDKVKVKLLGLDDRGKVRLSMKAVDQTTGEDLEAKQKAENAPAAE</sequence>
<feature type="chain" id="PRO_1000192477" description="Polyribonucleotide nucleotidyltransferase">
    <location>
        <begin position="1"/>
        <end position="714"/>
    </location>
</feature>
<feature type="domain" description="KH" evidence="1">
    <location>
        <begin position="554"/>
        <end position="613"/>
    </location>
</feature>
<feature type="domain" description="S1 motif" evidence="1">
    <location>
        <begin position="623"/>
        <end position="691"/>
    </location>
</feature>
<feature type="binding site" evidence="1">
    <location>
        <position position="487"/>
    </location>
    <ligand>
        <name>Mg(2+)</name>
        <dbReference type="ChEBI" id="CHEBI:18420"/>
    </ligand>
</feature>
<feature type="binding site" evidence="1">
    <location>
        <position position="493"/>
    </location>
    <ligand>
        <name>Mg(2+)</name>
        <dbReference type="ChEBI" id="CHEBI:18420"/>
    </ligand>
</feature>
<comment type="function">
    <text evidence="1">Involved in mRNA degradation. Catalyzes the phosphorolysis of single-stranded polyribonucleotides processively in the 3'- to 5'-direction.</text>
</comment>
<comment type="catalytic activity">
    <reaction evidence="1">
        <text>RNA(n+1) + phosphate = RNA(n) + a ribonucleoside 5'-diphosphate</text>
        <dbReference type="Rhea" id="RHEA:22096"/>
        <dbReference type="Rhea" id="RHEA-COMP:14527"/>
        <dbReference type="Rhea" id="RHEA-COMP:17342"/>
        <dbReference type="ChEBI" id="CHEBI:43474"/>
        <dbReference type="ChEBI" id="CHEBI:57930"/>
        <dbReference type="ChEBI" id="CHEBI:140395"/>
        <dbReference type="EC" id="2.7.7.8"/>
    </reaction>
</comment>
<comment type="cofactor">
    <cofactor evidence="1">
        <name>Mg(2+)</name>
        <dbReference type="ChEBI" id="CHEBI:18420"/>
    </cofactor>
</comment>
<comment type="subcellular location">
    <subcellularLocation>
        <location evidence="1">Cytoplasm</location>
    </subcellularLocation>
</comment>
<comment type="similarity">
    <text evidence="1">Belongs to the polyribonucleotide nucleotidyltransferase family.</text>
</comment>
<dbReference type="EC" id="2.7.7.8" evidence="1"/>
<dbReference type="EMBL" id="CP001196">
    <property type="protein sequence ID" value="ACI91648.1"/>
    <property type="molecule type" value="Genomic_DNA"/>
</dbReference>
<dbReference type="EMBL" id="CP002826">
    <property type="protein sequence ID" value="AEI04765.1"/>
    <property type="molecule type" value="Genomic_DNA"/>
</dbReference>
<dbReference type="RefSeq" id="WP_012561679.1">
    <property type="nucleotide sequence ID" value="NC_015684.1"/>
</dbReference>
<dbReference type="SMR" id="B6JCR8"/>
<dbReference type="STRING" id="504832.OCA5_c00310"/>
<dbReference type="KEGG" id="oca:OCAR_4503"/>
<dbReference type="KEGG" id="ocg:OCA5_c00310"/>
<dbReference type="PATRIC" id="fig|504832.7.peg.34"/>
<dbReference type="eggNOG" id="COG1185">
    <property type="taxonomic scope" value="Bacteria"/>
</dbReference>
<dbReference type="HOGENOM" id="CLU_004217_2_2_5"/>
<dbReference type="OrthoDB" id="9804305at2"/>
<dbReference type="Proteomes" id="UP000007730">
    <property type="component" value="Chromosome"/>
</dbReference>
<dbReference type="GO" id="GO:0005829">
    <property type="term" value="C:cytosol"/>
    <property type="evidence" value="ECO:0007669"/>
    <property type="project" value="TreeGrafter"/>
</dbReference>
<dbReference type="GO" id="GO:0000175">
    <property type="term" value="F:3'-5'-RNA exonuclease activity"/>
    <property type="evidence" value="ECO:0007669"/>
    <property type="project" value="TreeGrafter"/>
</dbReference>
<dbReference type="GO" id="GO:0000287">
    <property type="term" value="F:magnesium ion binding"/>
    <property type="evidence" value="ECO:0007669"/>
    <property type="project" value="UniProtKB-UniRule"/>
</dbReference>
<dbReference type="GO" id="GO:0004654">
    <property type="term" value="F:polyribonucleotide nucleotidyltransferase activity"/>
    <property type="evidence" value="ECO:0007669"/>
    <property type="project" value="UniProtKB-UniRule"/>
</dbReference>
<dbReference type="GO" id="GO:0003723">
    <property type="term" value="F:RNA binding"/>
    <property type="evidence" value="ECO:0007669"/>
    <property type="project" value="UniProtKB-UniRule"/>
</dbReference>
<dbReference type="GO" id="GO:0006402">
    <property type="term" value="P:mRNA catabolic process"/>
    <property type="evidence" value="ECO:0007669"/>
    <property type="project" value="UniProtKB-UniRule"/>
</dbReference>
<dbReference type="GO" id="GO:0006396">
    <property type="term" value="P:RNA processing"/>
    <property type="evidence" value="ECO:0007669"/>
    <property type="project" value="InterPro"/>
</dbReference>
<dbReference type="CDD" id="cd02393">
    <property type="entry name" value="KH-I_PNPase"/>
    <property type="match status" value="1"/>
</dbReference>
<dbReference type="CDD" id="cd11363">
    <property type="entry name" value="RNase_PH_PNPase_1"/>
    <property type="match status" value="1"/>
</dbReference>
<dbReference type="CDD" id="cd11364">
    <property type="entry name" value="RNase_PH_PNPase_2"/>
    <property type="match status" value="1"/>
</dbReference>
<dbReference type="CDD" id="cd04472">
    <property type="entry name" value="S1_PNPase"/>
    <property type="match status" value="1"/>
</dbReference>
<dbReference type="FunFam" id="2.40.50.140:FF:000107">
    <property type="entry name" value="Polyribonucleotide nucleotidyltransferase"/>
    <property type="match status" value="1"/>
</dbReference>
<dbReference type="FunFam" id="3.30.1370.10:FF:000001">
    <property type="entry name" value="Polyribonucleotide nucleotidyltransferase"/>
    <property type="match status" value="1"/>
</dbReference>
<dbReference type="FunFam" id="3.30.230.70:FF:000001">
    <property type="entry name" value="Polyribonucleotide nucleotidyltransferase"/>
    <property type="match status" value="1"/>
</dbReference>
<dbReference type="FunFam" id="3.30.230.70:FF:000002">
    <property type="entry name" value="Polyribonucleotide nucleotidyltransferase"/>
    <property type="match status" value="1"/>
</dbReference>
<dbReference type="Gene3D" id="3.30.230.70">
    <property type="entry name" value="GHMP Kinase, N-terminal domain"/>
    <property type="match status" value="2"/>
</dbReference>
<dbReference type="Gene3D" id="3.30.1370.10">
    <property type="entry name" value="K Homology domain, type 1"/>
    <property type="match status" value="1"/>
</dbReference>
<dbReference type="Gene3D" id="2.40.50.140">
    <property type="entry name" value="Nucleic acid-binding proteins"/>
    <property type="match status" value="1"/>
</dbReference>
<dbReference type="HAMAP" id="MF_01595">
    <property type="entry name" value="PNPase"/>
    <property type="match status" value="1"/>
</dbReference>
<dbReference type="InterPro" id="IPR001247">
    <property type="entry name" value="ExoRNase_PH_dom1"/>
</dbReference>
<dbReference type="InterPro" id="IPR015847">
    <property type="entry name" value="ExoRNase_PH_dom2"/>
</dbReference>
<dbReference type="InterPro" id="IPR036345">
    <property type="entry name" value="ExoRNase_PH_dom2_sf"/>
</dbReference>
<dbReference type="InterPro" id="IPR004087">
    <property type="entry name" value="KH_dom"/>
</dbReference>
<dbReference type="InterPro" id="IPR004088">
    <property type="entry name" value="KH_dom_type_1"/>
</dbReference>
<dbReference type="InterPro" id="IPR036612">
    <property type="entry name" value="KH_dom_type_1_sf"/>
</dbReference>
<dbReference type="InterPro" id="IPR012340">
    <property type="entry name" value="NA-bd_OB-fold"/>
</dbReference>
<dbReference type="InterPro" id="IPR012162">
    <property type="entry name" value="PNPase"/>
</dbReference>
<dbReference type="InterPro" id="IPR027408">
    <property type="entry name" value="PNPase/RNase_PH_dom_sf"/>
</dbReference>
<dbReference type="InterPro" id="IPR015848">
    <property type="entry name" value="PNPase_PH_RNA-bd_bac/org-type"/>
</dbReference>
<dbReference type="InterPro" id="IPR036456">
    <property type="entry name" value="PNPase_PH_RNA-bd_sf"/>
</dbReference>
<dbReference type="InterPro" id="IPR020568">
    <property type="entry name" value="Ribosomal_Su5_D2-typ_SF"/>
</dbReference>
<dbReference type="InterPro" id="IPR003029">
    <property type="entry name" value="S1_domain"/>
</dbReference>
<dbReference type="NCBIfam" id="TIGR03591">
    <property type="entry name" value="polynuc_phos"/>
    <property type="match status" value="1"/>
</dbReference>
<dbReference type="NCBIfam" id="NF008805">
    <property type="entry name" value="PRK11824.1"/>
    <property type="match status" value="1"/>
</dbReference>
<dbReference type="PANTHER" id="PTHR11252">
    <property type="entry name" value="POLYRIBONUCLEOTIDE NUCLEOTIDYLTRANSFERASE"/>
    <property type="match status" value="1"/>
</dbReference>
<dbReference type="PANTHER" id="PTHR11252:SF0">
    <property type="entry name" value="POLYRIBONUCLEOTIDE NUCLEOTIDYLTRANSFERASE 1, MITOCHONDRIAL"/>
    <property type="match status" value="1"/>
</dbReference>
<dbReference type="Pfam" id="PF00013">
    <property type="entry name" value="KH_1"/>
    <property type="match status" value="1"/>
</dbReference>
<dbReference type="Pfam" id="PF03726">
    <property type="entry name" value="PNPase"/>
    <property type="match status" value="1"/>
</dbReference>
<dbReference type="Pfam" id="PF01138">
    <property type="entry name" value="RNase_PH"/>
    <property type="match status" value="2"/>
</dbReference>
<dbReference type="Pfam" id="PF03725">
    <property type="entry name" value="RNase_PH_C"/>
    <property type="match status" value="2"/>
</dbReference>
<dbReference type="Pfam" id="PF00575">
    <property type="entry name" value="S1"/>
    <property type="match status" value="1"/>
</dbReference>
<dbReference type="PIRSF" id="PIRSF005499">
    <property type="entry name" value="PNPase"/>
    <property type="match status" value="1"/>
</dbReference>
<dbReference type="SMART" id="SM00322">
    <property type="entry name" value="KH"/>
    <property type="match status" value="1"/>
</dbReference>
<dbReference type="SMART" id="SM00316">
    <property type="entry name" value="S1"/>
    <property type="match status" value="1"/>
</dbReference>
<dbReference type="SUPFAM" id="SSF54791">
    <property type="entry name" value="Eukaryotic type KH-domain (KH-domain type I)"/>
    <property type="match status" value="1"/>
</dbReference>
<dbReference type="SUPFAM" id="SSF50249">
    <property type="entry name" value="Nucleic acid-binding proteins"/>
    <property type="match status" value="1"/>
</dbReference>
<dbReference type="SUPFAM" id="SSF46915">
    <property type="entry name" value="Polynucleotide phosphorylase/guanosine pentaphosphate synthase (PNPase/GPSI), domain 3"/>
    <property type="match status" value="1"/>
</dbReference>
<dbReference type="SUPFAM" id="SSF55666">
    <property type="entry name" value="Ribonuclease PH domain 2-like"/>
    <property type="match status" value="2"/>
</dbReference>
<dbReference type="SUPFAM" id="SSF54211">
    <property type="entry name" value="Ribosomal protein S5 domain 2-like"/>
    <property type="match status" value="2"/>
</dbReference>
<dbReference type="PROSITE" id="PS50084">
    <property type="entry name" value="KH_TYPE_1"/>
    <property type="match status" value="1"/>
</dbReference>
<dbReference type="PROSITE" id="PS50126">
    <property type="entry name" value="S1"/>
    <property type="match status" value="1"/>
</dbReference>
<accession>B6JCR8</accession>
<accession>F8BZN1</accession>
<protein>
    <recommendedName>
        <fullName evidence="1">Polyribonucleotide nucleotidyltransferase</fullName>
        <ecNumber evidence="1">2.7.7.8</ecNumber>
    </recommendedName>
    <alternativeName>
        <fullName evidence="1">Polynucleotide phosphorylase</fullName>
        <shortName evidence="1">PNPase</shortName>
    </alternativeName>
</protein>
<reference key="1">
    <citation type="journal article" date="2008" name="J. Bacteriol.">
        <title>Genome sequence of the chemolithoautotrophic bacterium Oligotropha carboxidovorans OM5T.</title>
        <authorList>
            <person name="Paul D."/>
            <person name="Bridges S."/>
            <person name="Burgess S.C."/>
            <person name="Dandass Y."/>
            <person name="Lawrence M.L."/>
        </authorList>
    </citation>
    <scope>NUCLEOTIDE SEQUENCE [LARGE SCALE GENOMIC DNA]</scope>
    <source>
        <strain>ATCC 49405 / DSM 1227 / KCTC 32145 / OM5</strain>
    </source>
</reference>
<reference key="2">
    <citation type="journal article" date="2011" name="J. Bacteriol.">
        <title>Complete genome sequences of the chemolithoautotrophic Oligotropha carboxidovorans strains OM4 and OM5.</title>
        <authorList>
            <person name="Volland S."/>
            <person name="Rachinger M."/>
            <person name="Strittmatter A."/>
            <person name="Daniel R."/>
            <person name="Gottschalk G."/>
            <person name="Meyer O."/>
        </authorList>
    </citation>
    <scope>NUCLEOTIDE SEQUENCE [LARGE SCALE GENOMIC DNA]</scope>
    <source>
        <strain>ATCC 49405 / DSM 1227 / KCTC 32145 / OM5</strain>
    </source>
</reference>